<reference key="1">
    <citation type="submission" date="2004-06" db="EMBL/GenBank/DDBJ databases">
        <authorList>
            <consortium name="NIH - Xenopus Gene Collection (XGC) project"/>
        </authorList>
    </citation>
    <scope>NUCLEOTIDE SEQUENCE [LARGE SCALE MRNA]</scope>
    <source>
        <tissue>Ovary</tissue>
    </source>
</reference>
<protein>
    <recommendedName>
        <fullName>Tumor necrosis factor alpha-induced protein 8</fullName>
        <shortName>TNF alpha-induced protein 8</shortName>
    </recommendedName>
</protein>
<sequence length="189" mass="21951">MATDIFNSKNLAVQAQKKILGKMASSKYIATSLIDDTSGEVLDELYQVTREYTQNKKDAEKITKNLIKTVIKLAVLYRNNQFNEEEIGLMEKFKRKVHQLAMTVVSFYQVEYTFDRNVLSKLLNECRELLHQVIQRHLTAKSHGRVNNVFDHFSNCEFLAALYNPFGPYKKHLQRLCNGVNKMLDEDNI</sequence>
<evidence type="ECO:0000250" key="1"/>
<evidence type="ECO:0000305" key="2"/>
<comment type="function">
    <text evidence="1">Acts as a negative mediator of apoptosis.</text>
</comment>
<comment type="subcellular location">
    <subcellularLocation>
        <location evidence="1">Cytoplasm</location>
    </subcellularLocation>
</comment>
<comment type="similarity">
    <text evidence="2">Belongs to the TNFAIP8 family.</text>
</comment>
<accession>Q6GQ44</accession>
<keyword id="KW-0053">Apoptosis</keyword>
<keyword id="KW-0963">Cytoplasm</keyword>
<keyword id="KW-1185">Reference proteome</keyword>
<proteinExistence type="evidence at transcript level"/>
<dbReference type="EMBL" id="BC072904">
    <property type="protein sequence ID" value="AAH72904.1"/>
    <property type="molecule type" value="mRNA"/>
</dbReference>
<dbReference type="RefSeq" id="NP_001085537.1">
    <property type="nucleotide sequence ID" value="NM_001092068.1"/>
</dbReference>
<dbReference type="SMR" id="Q6GQ44"/>
<dbReference type="DNASU" id="443963"/>
<dbReference type="GeneID" id="443963"/>
<dbReference type="KEGG" id="xla:443963"/>
<dbReference type="AGR" id="Xenbase:XB-GENE-941179"/>
<dbReference type="CTD" id="443963"/>
<dbReference type="Xenbase" id="XB-GENE-941179">
    <property type="gene designation" value="tnfaip8.S"/>
</dbReference>
<dbReference type="OMA" id="REFTRSC"/>
<dbReference type="OrthoDB" id="10055976at2759"/>
<dbReference type="Proteomes" id="UP000186698">
    <property type="component" value="Chromosome 1S"/>
</dbReference>
<dbReference type="Bgee" id="443963">
    <property type="expression patterns" value="Expressed in spleen and 19 other cell types or tissues"/>
</dbReference>
<dbReference type="GO" id="GO:0005737">
    <property type="term" value="C:cytoplasm"/>
    <property type="evidence" value="ECO:0000250"/>
    <property type="project" value="UniProtKB"/>
</dbReference>
<dbReference type="GO" id="GO:0043027">
    <property type="term" value="F:cysteine-type endopeptidase inhibitor activity involved in apoptotic process"/>
    <property type="evidence" value="ECO:0000250"/>
    <property type="project" value="UniProtKB"/>
</dbReference>
<dbReference type="GO" id="GO:0006915">
    <property type="term" value="P:apoptotic process"/>
    <property type="evidence" value="ECO:0007669"/>
    <property type="project" value="UniProtKB-KW"/>
</dbReference>
<dbReference type="GO" id="GO:0043065">
    <property type="term" value="P:positive regulation of apoptotic process"/>
    <property type="evidence" value="ECO:0000250"/>
    <property type="project" value="UniProtKB"/>
</dbReference>
<dbReference type="FunFam" id="1.20.1440.160:FF:000001">
    <property type="entry name" value="Tumor necrosis factor alpha-induced protein 8-like 1"/>
    <property type="match status" value="1"/>
</dbReference>
<dbReference type="Gene3D" id="1.20.1440.160">
    <property type="entry name" value="Tumor necrosis factor alpha-induced protein 8-like"/>
    <property type="match status" value="1"/>
</dbReference>
<dbReference type="InterPro" id="IPR008477">
    <property type="entry name" value="TNFAIP8-like"/>
</dbReference>
<dbReference type="InterPro" id="IPR038355">
    <property type="entry name" value="TNFAIP8_sf"/>
</dbReference>
<dbReference type="PANTHER" id="PTHR12757:SF3">
    <property type="entry name" value="TUMOR NECROSIS FACTOR ALPHA-INDUCED PROTEIN 8"/>
    <property type="match status" value="1"/>
</dbReference>
<dbReference type="PANTHER" id="PTHR12757">
    <property type="entry name" value="TUMOR NECROSIS FACTOR INDUCED PROTEIN"/>
    <property type="match status" value="1"/>
</dbReference>
<dbReference type="Pfam" id="PF05527">
    <property type="entry name" value="DUF758"/>
    <property type="match status" value="1"/>
</dbReference>
<gene>
    <name type="primary">tnfaip8</name>
</gene>
<feature type="chain" id="PRO_0000285722" description="Tumor necrosis factor alpha-induced protein 8">
    <location>
        <begin position="1"/>
        <end position="189"/>
    </location>
</feature>
<name>TFIP8_XENLA</name>
<organism>
    <name type="scientific">Xenopus laevis</name>
    <name type="common">African clawed frog</name>
    <dbReference type="NCBI Taxonomy" id="8355"/>
    <lineage>
        <taxon>Eukaryota</taxon>
        <taxon>Metazoa</taxon>
        <taxon>Chordata</taxon>
        <taxon>Craniata</taxon>
        <taxon>Vertebrata</taxon>
        <taxon>Euteleostomi</taxon>
        <taxon>Amphibia</taxon>
        <taxon>Batrachia</taxon>
        <taxon>Anura</taxon>
        <taxon>Pipoidea</taxon>
        <taxon>Pipidae</taxon>
        <taxon>Xenopodinae</taxon>
        <taxon>Xenopus</taxon>
        <taxon>Xenopus</taxon>
    </lineage>
</organism>